<feature type="chain" id="PRO_0000403358" description="Peroxisome biogenesis protein 7">
    <location>
        <begin position="1"/>
        <end position="317"/>
    </location>
</feature>
<feature type="repeat" description="WD 1">
    <location>
        <begin position="58"/>
        <end position="98"/>
    </location>
</feature>
<feature type="repeat" description="WD 2">
    <location>
        <begin position="104"/>
        <end position="144"/>
    </location>
</feature>
<feature type="repeat" description="WD 3">
    <location>
        <begin position="147"/>
        <end position="187"/>
    </location>
</feature>
<feature type="repeat" description="WD 4">
    <location>
        <begin position="190"/>
        <end position="230"/>
    </location>
</feature>
<feature type="repeat" description="WD 5">
    <location>
        <begin position="234"/>
        <end position="274"/>
    </location>
</feature>
<feature type="repeat" description="WD 6">
    <location>
        <begin position="278"/>
        <end position="317"/>
    </location>
</feature>
<feature type="mutagenesis site" description="In pex7-2; reduced sensitivity to indole-3-butyric acid and loss of interaction with PEX5 and PST2-cargo." evidence="8">
    <original>T</original>
    <variation>I</variation>
    <location>
        <position position="124"/>
    </location>
</feature>
<feature type="sequence conflict" description="In Ref. 1; AAD27848." evidence="9" ref="1">
    <original>I</original>
    <variation>N</variation>
    <location>
        <position position="80"/>
    </location>
</feature>
<comment type="function">
    <text evidence="3 4 6 7 8">Receptor required for the peroxisomal import of proteins containing a C-terminal PTS2-type peroxisomal targeting signal (PubMed:15548601, PubMed:15637057, PubMed:17478547, PubMed:19594707, PubMed:20130089). Specifically binds to cargo proteins containing a PTS2 peroxisomal targeting signal in the cytosol (PubMed:15548601, PubMed:15637057, PubMed:17478547, PubMed:19594707, PubMed:20130089). Cargo protein-binding triggers interaction with PEX5 and formation of a ternary complex composed of PEX5 and PEX7 along with PTS2-containing cargo proteins, which is tranlocated into peroxisomes by passing through the PEX13-PEX14 docking complex (PubMed:15548601, PubMed:15637057, PubMed:17478547, PubMed:19594707, PubMed:20130089).</text>
</comment>
<comment type="subunit">
    <text evidence="2 4 5 7 8">Interacts with PEX5; interaction only takes place when PEX7 is associated with cargo proteins (PubMed:11978862, PubMed:15637057, PubMed:20130089). Interacts with PEX13 (via N-terminus) and PEX12 (via C-terminus), but not with PEX14 (PubMed:11978862, PubMed:16813573, PubMed:19594707).</text>
</comment>
<comment type="interaction">
    <interactant intactId="EBI-9536794">
        <id>Q9XF57</id>
    </interactant>
    <interactant intactId="EBI-25521360">
        <id>Q8LF48</id>
        <label>KAT1</label>
    </interactant>
    <organismsDiffer>false</organismsDiffer>
    <experiments>3</experiments>
</comment>
<comment type="interaction">
    <interactant intactId="EBI-9536794">
        <id>Q9XF57</id>
    </interactant>
    <interactant intactId="EBI-4468126">
        <id>Q56WD9</id>
        <label>PED1</label>
    </interactant>
    <organismsDiffer>false</organismsDiffer>
    <experiments>3</experiments>
</comment>
<comment type="interaction">
    <interactant intactId="EBI-9536794">
        <id>Q9XF57</id>
    </interactant>
    <interactant intactId="EBI-4426557">
        <id>Q84MB2</id>
        <label>TIFY8</label>
    </interactant>
    <organismsDiffer>false</organismsDiffer>
    <experiments>3</experiments>
</comment>
<comment type="interaction">
    <interactant intactId="EBI-9536794">
        <id>Q9XF57</id>
    </interactant>
    <interactant intactId="EBI-15193683">
        <id>Q5CCK4</id>
        <label>VAL2</label>
    </interactant>
    <organismsDiffer>false</organismsDiffer>
    <experiments>3</experiments>
</comment>
<comment type="subcellular location">
    <subcellularLocation>
        <location evidence="7">Cytoplasm</location>
        <location evidence="7">Cytosol</location>
    </subcellularLocation>
    <subcellularLocation>
        <location evidence="7">Peroxisome matrix</location>
    </subcellularLocation>
    <text evidence="7">The loss of PEX12, PEX13 or PEX14 prevents the targeting of PEX7 to peroxisomes.</text>
</comment>
<comment type="tissue specificity">
    <text evidence="2">Expressed in siliques and leaves, but barely detectable in flowers, stems and roots.</text>
</comment>
<comment type="developmental stage">
    <text evidence="2">Expressed at the early stage of germination.</text>
</comment>
<comment type="domain">
    <text evidence="1">The WD40 repeats are involved in the binding of PTS2-containing proteins.</text>
</comment>
<comment type="disruption phenotype">
    <text evidence="3">No visible phenotype, but reduced sensitivity to indole-3-butyric acid (IBA) and inefficient peroxisomal import of PTS2-containing proteins.</text>
</comment>
<comment type="miscellaneous">
    <text evidence="8">The binding of a cargo to PEX7 is necessary but not sufficient for the targeting of the complex to the peroxisome. PEX12, PEX13 and PEX14 play a critical role in this targeting. PEX7 is required for PEX5 stability in light-grown seedlings.</text>
</comment>
<comment type="similarity">
    <text evidence="9">Belongs to the WD repeat peroxin-7 family.</text>
</comment>
<sequence length="317" mass="35473">MPVFKAPFNGYSVKFSPFYESRLAVATAQNFGILGNGRIHVLELAPGAPGVTESVSYDTADAVYDVCWSESHDSVLIAAIGDGSVKIYDTALPPPSNPIRSFQEHAREVQSVDYNPTRRDSFLTSSWDDTVKLWAMDRPASVRTFKEHAYCVYQAVWNPKHGDVFASASGDCTLRIWDVREPGSTMIIPAHDFEILSCDWNKYDDCILATSSVDKTVKVWDVRSYRVPLAVLNGHGYAVRKVKFSPHRRSLIASCSYDMSVCLWDYMVEDALVGRYDHHTEFAVGIDMSVLVEGLMASTGWDELVYVWQQGMDPRAS</sequence>
<keyword id="KW-0963">Cytoplasm</keyword>
<keyword id="KW-0576">Peroxisome</keyword>
<keyword id="KW-0962">Peroxisome biogenesis</keyword>
<keyword id="KW-0653">Protein transport</keyword>
<keyword id="KW-0675">Receptor</keyword>
<keyword id="KW-1185">Reference proteome</keyword>
<keyword id="KW-0677">Repeat</keyword>
<keyword id="KW-0813">Transport</keyword>
<keyword id="KW-0853">WD repeat</keyword>
<reference key="1">
    <citation type="online journal article" date="1999" name="Plant Gene Register">
        <title>Sequence analysis of a cDNA encoding Pex7p, a peroxisomal targeting signal 2 receptor from Arabidopsis thaliana.</title>
        <authorList>
            <person name="Schumann U."/>
            <person name="Gietl C."/>
            <person name="Schmid M."/>
        </authorList>
        <locator>PGR99-060</locator>
    </citation>
    <scope>NUCLEOTIDE SEQUENCE [MRNA]</scope>
</reference>
<reference key="2">
    <citation type="journal article" date="2000" name="Nature">
        <title>Sequence and analysis of chromosome 1 of the plant Arabidopsis thaliana.</title>
        <authorList>
            <person name="Theologis A."/>
            <person name="Ecker J.R."/>
            <person name="Palm C.J."/>
            <person name="Federspiel N.A."/>
            <person name="Kaul S."/>
            <person name="White O."/>
            <person name="Alonso J."/>
            <person name="Altafi H."/>
            <person name="Araujo R."/>
            <person name="Bowman C.L."/>
            <person name="Brooks S.Y."/>
            <person name="Buehler E."/>
            <person name="Chan A."/>
            <person name="Chao Q."/>
            <person name="Chen H."/>
            <person name="Cheuk R.F."/>
            <person name="Chin C.W."/>
            <person name="Chung M.K."/>
            <person name="Conn L."/>
            <person name="Conway A.B."/>
            <person name="Conway A.R."/>
            <person name="Creasy T.H."/>
            <person name="Dewar K."/>
            <person name="Dunn P."/>
            <person name="Etgu P."/>
            <person name="Feldblyum T.V."/>
            <person name="Feng J.-D."/>
            <person name="Fong B."/>
            <person name="Fujii C.Y."/>
            <person name="Gill J.E."/>
            <person name="Goldsmith A.D."/>
            <person name="Haas B."/>
            <person name="Hansen N.F."/>
            <person name="Hughes B."/>
            <person name="Huizar L."/>
            <person name="Hunter J.L."/>
            <person name="Jenkins J."/>
            <person name="Johnson-Hopson C."/>
            <person name="Khan S."/>
            <person name="Khaykin E."/>
            <person name="Kim C.J."/>
            <person name="Koo H.L."/>
            <person name="Kremenetskaia I."/>
            <person name="Kurtz D.B."/>
            <person name="Kwan A."/>
            <person name="Lam B."/>
            <person name="Langin-Hooper S."/>
            <person name="Lee A."/>
            <person name="Lee J.M."/>
            <person name="Lenz C.A."/>
            <person name="Li J.H."/>
            <person name="Li Y.-P."/>
            <person name="Lin X."/>
            <person name="Liu S.X."/>
            <person name="Liu Z.A."/>
            <person name="Luros J.S."/>
            <person name="Maiti R."/>
            <person name="Marziali A."/>
            <person name="Militscher J."/>
            <person name="Miranda M."/>
            <person name="Nguyen M."/>
            <person name="Nierman W.C."/>
            <person name="Osborne B.I."/>
            <person name="Pai G."/>
            <person name="Peterson J."/>
            <person name="Pham P.K."/>
            <person name="Rizzo M."/>
            <person name="Rooney T."/>
            <person name="Rowley D."/>
            <person name="Sakano H."/>
            <person name="Salzberg S.L."/>
            <person name="Schwartz J.R."/>
            <person name="Shinn P."/>
            <person name="Southwick A.M."/>
            <person name="Sun H."/>
            <person name="Tallon L.J."/>
            <person name="Tambunga G."/>
            <person name="Toriumi M.J."/>
            <person name="Town C.D."/>
            <person name="Utterback T."/>
            <person name="Van Aken S."/>
            <person name="Vaysberg M."/>
            <person name="Vysotskaia V.S."/>
            <person name="Walker M."/>
            <person name="Wu D."/>
            <person name="Yu G."/>
            <person name="Fraser C.M."/>
            <person name="Venter J.C."/>
            <person name="Davis R.W."/>
        </authorList>
    </citation>
    <scope>NUCLEOTIDE SEQUENCE [LARGE SCALE GENOMIC DNA]</scope>
    <source>
        <strain>cv. Columbia</strain>
    </source>
</reference>
<reference key="3">
    <citation type="journal article" date="2017" name="Plant J.">
        <title>Araport11: a complete reannotation of the Arabidopsis thaliana reference genome.</title>
        <authorList>
            <person name="Cheng C.Y."/>
            <person name="Krishnakumar V."/>
            <person name="Chan A.P."/>
            <person name="Thibaud-Nissen F."/>
            <person name="Schobel S."/>
            <person name="Town C.D."/>
        </authorList>
    </citation>
    <scope>GENOME REANNOTATION</scope>
    <source>
        <strain>cv. Columbia</strain>
    </source>
</reference>
<reference key="4">
    <citation type="submission" date="2006-03" db="EMBL/GenBank/DDBJ databases">
        <title>Arabidopsis ORF clones.</title>
        <authorList>
            <person name="Kim C.J."/>
            <person name="Chen H."/>
            <person name="Shinn P."/>
            <person name="Ecker J.R."/>
        </authorList>
    </citation>
    <scope>NUCLEOTIDE SEQUENCE [LARGE SCALE MRNA]</scope>
</reference>
<reference key="5">
    <citation type="journal article" date="2002" name="Plant Cell Physiol.">
        <title>Direct interaction and determination of binding domains among peroxisomal import factors in Arabidopsis thaliana.</title>
        <authorList>
            <person name="Nito K."/>
            <person name="Hayashi M."/>
            <person name="Nishimura M."/>
        </authorList>
    </citation>
    <scope>INTERACTION WITH PEX5 AND PEX14</scope>
    <scope>TISSUE SPECIFICITY</scope>
    <scope>DEVELOPMENTAL STAGE</scope>
</reference>
<reference key="6">
    <citation type="journal article" date="2005" name="J. Biol. Chem.">
        <title>Differential contribution of two peroxisomal protein receptors to the maintenance of peroxisomal functions in Arabidopsis.</title>
        <authorList>
            <person name="Hayashi M."/>
            <person name="Yagi M."/>
            <person name="Nito K."/>
            <person name="Kamada T."/>
            <person name="Nishimura M."/>
        </authorList>
    </citation>
    <scope>FUNCTION</scope>
    <scope>INTERACTION WITH PEX5</scope>
</reference>
<reference key="7">
    <citation type="journal article" date="2005" name="Mol. Biol. Cell">
        <title>The Arabidopsis peroxisomal targeting signal type 2 receptor PEX7 is necessary for peroxisome function and dependent on PEX5.</title>
        <authorList>
            <person name="Woodward A.W."/>
            <person name="Bartel B."/>
        </authorList>
    </citation>
    <scope>FUNCTION</scope>
    <scope>DISRUPTION PHENOTYPE</scope>
</reference>
<reference key="8">
    <citation type="journal article" date="2006" name="Plant J.">
        <title>The Arabidopsis pex12 and pex13 mutants are defective in both PTS1- and PTS2-dependent protein transport to peroxisomes.</title>
        <authorList>
            <person name="Mano S."/>
            <person name="Nakamori C."/>
            <person name="Nito K."/>
            <person name="Kondo M."/>
            <person name="Nishimura M."/>
        </authorList>
    </citation>
    <scope>INTERACTION WITH PEX13</scope>
</reference>
<reference key="9">
    <citation type="journal article" date="2007" name="Plant Cell Physiol.">
        <title>Functional classification of Arabidopsis peroxisome biogenesis factors proposed from analyses of knockdown mutants.</title>
        <authorList>
            <person name="Nito K."/>
            <person name="Kamigaki A."/>
            <person name="Kondo M."/>
            <person name="Hayashi M."/>
            <person name="Nishimura M."/>
        </authorList>
    </citation>
    <scope>FUNCTION</scope>
</reference>
<reference key="10">
    <citation type="journal article" date="2009" name="Plant J.">
        <title>Molecular components required for the targeting of PEX7 to peroxisomes in Arabidopsis thaliana.</title>
        <authorList>
            <person name="Singh T."/>
            <person name="Hayashi M."/>
            <person name="Mano S."/>
            <person name="Arai Y."/>
            <person name="Goto S."/>
            <person name="Nishimura M."/>
        </authorList>
    </citation>
    <scope>FUNCTION</scope>
    <scope>SUBCELLULAR LOCATION</scope>
    <scope>INTERACTION WITH PEX12 AND PTS2-CONTAINING PROTEINS</scope>
</reference>
<reference key="11">
    <citation type="journal article" date="2010" name="Mol. Biol. Cell">
        <title>Interdependence of the peroxisome-targeting receptors in Arabidopsis thaliana: PEX7 facilitates PEX5 accumulation and import of PTS1 cargo into peroxisomes.</title>
        <authorList>
            <person name="Ramon N.M."/>
            <person name="Bartel B."/>
        </authorList>
    </citation>
    <scope>FUNCTION</scope>
    <scope>MUTAGENESIS OF THR-124</scope>
    <scope>INTERACTION WITH PEX5 AND PTS2-CONTAINING PROTEINS</scope>
</reference>
<dbReference type="EMBL" id="AF130973">
    <property type="protein sequence ID" value="AAD27848.1"/>
    <property type="molecule type" value="mRNA"/>
</dbReference>
<dbReference type="EMBL" id="AC021043">
    <property type="protein sequence ID" value="AAF88113.1"/>
    <property type="molecule type" value="Genomic_DNA"/>
</dbReference>
<dbReference type="EMBL" id="CP002684">
    <property type="protein sequence ID" value="AEE31066.1"/>
    <property type="molecule type" value="Genomic_DNA"/>
</dbReference>
<dbReference type="EMBL" id="BT024863">
    <property type="protein sequence ID" value="ABD65594.1"/>
    <property type="molecule type" value="mRNA"/>
</dbReference>
<dbReference type="PIR" id="B86415">
    <property type="entry name" value="B86415"/>
</dbReference>
<dbReference type="RefSeq" id="NP_174220.1">
    <property type="nucleotide sequence ID" value="NM_102666.4"/>
</dbReference>
<dbReference type="SMR" id="Q9XF57"/>
<dbReference type="BioGRID" id="25035">
    <property type="interactions" value="18"/>
</dbReference>
<dbReference type="FunCoup" id="Q9XF57">
    <property type="interactions" value="1274"/>
</dbReference>
<dbReference type="IntAct" id="Q9XF57">
    <property type="interactions" value="8"/>
</dbReference>
<dbReference type="MINT" id="Q9XF57"/>
<dbReference type="STRING" id="3702.Q9XF57"/>
<dbReference type="TCDB" id="3.A.20.1.2">
    <property type="family name" value="the peroxisomal protein importer (ppi) family"/>
</dbReference>
<dbReference type="PaxDb" id="3702-AT1G29260.1"/>
<dbReference type="ProteomicsDB" id="236704"/>
<dbReference type="EnsemblPlants" id="AT1G29260.1">
    <property type="protein sequence ID" value="AT1G29260.1"/>
    <property type="gene ID" value="AT1G29260"/>
</dbReference>
<dbReference type="GeneID" id="839800"/>
<dbReference type="Gramene" id="AT1G29260.1">
    <property type="protein sequence ID" value="AT1G29260.1"/>
    <property type="gene ID" value="AT1G29260"/>
</dbReference>
<dbReference type="KEGG" id="ath:AT1G29260"/>
<dbReference type="Araport" id="AT1G29260"/>
<dbReference type="TAIR" id="AT1G29260">
    <property type="gene designation" value="PEX7"/>
</dbReference>
<dbReference type="eggNOG" id="KOG0277">
    <property type="taxonomic scope" value="Eukaryota"/>
</dbReference>
<dbReference type="HOGENOM" id="CLU_046581_0_0_1"/>
<dbReference type="InParanoid" id="Q9XF57"/>
<dbReference type="OMA" id="FAVHWNL"/>
<dbReference type="OrthoDB" id="273771at2759"/>
<dbReference type="PhylomeDB" id="Q9XF57"/>
<dbReference type="PRO" id="PR:Q9XF57"/>
<dbReference type="Proteomes" id="UP000006548">
    <property type="component" value="Chromosome 1"/>
</dbReference>
<dbReference type="ExpressionAtlas" id="Q9XF57">
    <property type="expression patterns" value="baseline and differential"/>
</dbReference>
<dbReference type="GO" id="GO:0080008">
    <property type="term" value="C:Cul4-RING E3 ubiquitin ligase complex"/>
    <property type="evidence" value="ECO:0000250"/>
    <property type="project" value="TAIR"/>
</dbReference>
<dbReference type="GO" id="GO:0005829">
    <property type="term" value="C:cytosol"/>
    <property type="evidence" value="ECO:0007669"/>
    <property type="project" value="UniProtKB-SubCell"/>
</dbReference>
<dbReference type="GO" id="GO:0005782">
    <property type="term" value="C:peroxisomal matrix"/>
    <property type="evidence" value="ECO:0007669"/>
    <property type="project" value="UniProtKB-SubCell"/>
</dbReference>
<dbReference type="GO" id="GO:0005053">
    <property type="term" value="F:peroxisome matrix targeting signal-2 binding"/>
    <property type="evidence" value="ECO:0007669"/>
    <property type="project" value="InterPro"/>
</dbReference>
<dbReference type="GO" id="GO:0016558">
    <property type="term" value="P:protein import into peroxisome matrix"/>
    <property type="evidence" value="ECO:0007669"/>
    <property type="project" value="InterPro"/>
</dbReference>
<dbReference type="GO" id="GO:0006625">
    <property type="term" value="P:protein targeting to peroxisome"/>
    <property type="evidence" value="ECO:0000315"/>
    <property type="project" value="TAIR"/>
</dbReference>
<dbReference type="FunFam" id="2.130.10.10:FF:000850">
    <property type="entry name" value="WD40 repeat-containing protein"/>
    <property type="match status" value="1"/>
</dbReference>
<dbReference type="Gene3D" id="2.130.10.10">
    <property type="entry name" value="YVTN repeat-like/Quinoprotein amine dehydrogenase"/>
    <property type="match status" value="1"/>
</dbReference>
<dbReference type="InterPro" id="IPR020472">
    <property type="entry name" value="G-protein_beta_WD-40_rep"/>
</dbReference>
<dbReference type="InterPro" id="IPR044536">
    <property type="entry name" value="PEX7"/>
</dbReference>
<dbReference type="InterPro" id="IPR015943">
    <property type="entry name" value="WD40/YVTN_repeat-like_dom_sf"/>
</dbReference>
<dbReference type="InterPro" id="IPR019775">
    <property type="entry name" value="WD40_repeat_CS"/>
</dbReference>
<dbReference type="InterPro" id="IPR036322">
    <property type="entry name" value="WD40_repeat_dom_sf"/>
</dbReference>
<dbReference type="InterPro" id="IPR001680">
    <property type="entry name" value="WD40_rpt"/>
</dbReference>
<dbReference type="PANTHER" id="PTHR46027">
    <property type="entry name" value="PEROXISOMAL TARGETING SIGNAL 2 RECEPTOR"/>
    <property type="match status" value="1"/>
</dbReference>
<dbReference type="PANTHER" id="PTHR46027:SF1">
    <property type="entry name" value="PEROXISOMAL TARGETING SIGNAL 2 RECEPTOR"/>
    <property type="match status" value="1"/>
</dbReference>
<dbReference type="Pfam" id="PF23609">
    <property type="entry name" value="Beta-prop_EIPR1"/>
    <property type="match status" value="1"/>
</dbReference>
<dbReference type="Pfam" id="PF00400">
    <property type="entry name" value="WD40"/>
    <property type="match status" value="2"/>
</dbReference>
<dbReference type="PRINTS" id="PR00320">
    <property type="entry name" value="GPROTEINBRPT"/>
</dbReference>
<dbReference type="SMART" id="SM00320">
    <property type="entry name" value="WD40"/>
    <property type="match status" value="6"/>
</dbReference>
<dbReference type="SUPFAM" id="SSF50978">
    <property type="entry name" value="WD40 repeat-like"/>
    <property type="match status" value="1"/>
</dbReference>
<dbReference type="PROSITE" id="PS00678">
    <property type="entry name" value="WD_REPEATS_1"/>
    <property type="match status" value="1"/>
</dbReference>
<dbReference type="PROSITE" id="PS50082">
    <property type="entry name" value="WD_REPEATS_2"/>
    <property type="match status" value="4"/>
</dbReference>
<dbReference type="PROSITE" id="PS50294">
    <property type="entry name" value="WD_REPEATS_REGION"/>
    <property type="match status" value="1"/>
</dbReference>
<evidence type="ECO:0000250" key="1"/>
<evidence type="ECO:0000269" key="2">
    <source>
    </source>
</evidence>
<evidence type="ECO:0000269" key="3">
    <source>
    </source>
</evidence>
<evidence type="ECO:0000269" key="4">
    <source>
    </source>
</evidence>
<evidence type="ECO:0000269" key="5">
    <source>
    </source>
</evidence>
<evidence type="ECO:0000269" key="6">
    <source>
    </source>
</evidence>
<evidence type="ECO:0000269" key="7">
    <source>
    </source>
</evidence>
<evidence type="ECO:0000269" key="8">
    <source>
    </source>
</evidence>
<evidence type="ECO:0000305" key="9"/>
<name>PEX7_ARATH</name>
<proteinExistence type="evidence at protein level"/>
<gene>
    <name type="primary">PEX7</name>
    <name type="ordered locus">At1g29260</name>
    <name type="ORF">F28N24.6</name>
</gene>
<organism>
    <name type="scientific">Arabidopsis thaliana</name>
    <name type="common">Mouse-ear cress</name>
    <dbReference type="NCBI Taxonomy" id="3702"/>
    <lineage>
        <taxon>Eukaryota</taxon>
        <taxon>Viridiplantae</taxon>
        <taxon>Streptophyta</taxon>
        <taxon>Embryophyta</taxon>
        <taxon>Tracheophyta</taxon>
        <taxon>Spermatophyta</taxon>
        <taxon>Magnoliopsida</taxon>
        <taxon>eudicotyledons</taxon>
        <taxon>Gunneridae</taxon>
        <taxon>Pentapetalae</taxon>
        <taxon>rosids</taxon>
        <taxon>malvids</taxon>
        <taxon>Brassicales</taxon>
        <taxon>Brassicaceae</taxon>
        <taxon>Camelineae</taxon>
        <taxon>Arabidopsis</taxon>
    </lineage>
</organism>
<protein>
    <recommendedName>
        <fullName>Peroxisome biogenesis protein 7</fullName>
    </recommendedName>
    <alternativeName>
        <fullName>Peroxin-7</fullName>
        <shortName>AtPEX7</shortName>
    </alternativeName>
    <alternativeName>
        <fullName>Peroxisomal targeting signal type 2 receptor</fullName>
    </alternativeName>
    <alternativeName>
        <fullName>Pex7p</fullName>
    </alternativeName>
</protein>
<accession>Q9XF57</accession>
<accession>Q9LP54</accession>